<accession>Q73WP7</accession>
<organism>
    <name type="scientific">Mycolicibacterium paratuberculosis (strain ATCC BAA-968 / K-10)</name>
    <name type="common">Mycobacterium paratuberculosis</name>
    <dbReference type="NCBI Taxonomy" id="262316"/>
    <lineage>
        <taxon>Bacteria</taxon>
        <taxon>Bacillati</taxon>
        <taxon>Actinomycetota</taxon>
        <taxon>Actinomycetes</taxon>
        <taxon>Mycobacteriales</taxon>
        <taxon>Mycobacteriaceae</taxon>
        <taxon>Mycobacterium</taxon>
        <taxon>Mycobacterium avium complex (MAC)</taxon>
    </lineage>
</organism>
<keyword id="KW-0378">Hydrolase</keyword>
<keyword id="KW-0479">Metal-binding</keyword>
<keyword id="KW-1185">Reference proteome</keyword>
<keyword id="KW-0862">Zinc</keyword>
<comment type="function">
    <text evidence="1">Catalyzes the deacetylation of 1D-myo-inositol 2-acetamido-2-deoxy-alpha-D-glucopyranoside (GlcNAc-Ins) in the mycothiol biosynthesis pathway.</text>
</comment>
<comment type="catalytic activity">
    <reaction evidence="1">
        <text>1D-myo-inositol 2-acetamido-2-deoxy-alpha-D-glucopyranoside + H2O = 1D-myo-inositol 2-amino-2-deoxy-alpha-D-glucopyranoside + acetate</text>
        <dbReference type="Rhea" id="RHEA:26180"/>
        <dbReference type="ChEBI" id="CHEBI:15377"/>
        <dbReference type="ChEBI" id="CHEBI:30089"/>
        <dbReference type="ChEBI" id="CHEBI:52442"/>
        <dbReference type="ChEBI" id="CHEBI:58886"/>
        <dbReference type="EC" id="3.5.1.103"/>
    </reaction>
</comment>
<comment type="cofactor">
    <cofactor evidence="1">
        <name>Zn(2+)</name>
        <dbReference type="ChEBI" id="CHEBI:29105"/>
    </cofactor>
    <text evidence="1">Binds 1 zinc ion per subunit.</text>
</comment>
<comment type="similarity">
    <text evidence="1">Belongs to the MshB deacetylase family.</text>
</comment>
<reference key="1">
    <citation type="journal article" date="2005" name="Proc. Natl. Acad. Sci. U.S.A.">
        <title>The complete genome sequence of Mycobacterium avium subspecies paratuberculosis.</title>
        <authorList>
            <person name="Li L."/>
            <person name="Bannantine J.P."/>
            <person name="Zhang Q."/>
            <person name="Amonsin A."/>
            <person name="May B.J."/>
            <person name="Alt D."/>
            <person name="Banerji N."/>
            <person name="Kanjilal S."/>
            <person name="Kapur V."/>
        </authorList>
    </citation>
    <scope>NUCLEOTIDE SEQUENCE [LARGE SCALE GENOMIC DNA]</scope>
    <source>
        <strain>ATCC BAA-968 / K-10</strain>
    </source>
</reference>
<feature type="chain" id="PRO_0000400201" description="1D-myo-inositol 2-acetamido-2-deoxy-alpha-D-glucopyranoside deacetylase">
    <location>
        <begin position="1"/>
        <end position="300"/>
    </location>
</feature>
<feature type="binding site" evidence="1">
    <location>
        <position position="13"/>
    </location>
    <ligand>
        <name>Zn(2+)</name>
        <dbReference type="ChEBI" id="CHEBI:29105"/>
    </ligand>
</feature>
<feature type="binding site" evidence="1">
    <location>
        <position position="16"/>
    </location>
    <ligand>
        <name>Zn(2+)</name>
        <dbReference type="ChEBI" id="CHEBI:29105"/>
    </ligand>
</feature>
<feature type="binding site" evidence="1">
    <location>
        <position position="147"/>
    </location>
    <ligand>
        <name>Zn(2+)</name>
        <dbReference type="ChEBI" id="CHEBI:29105"/>
    </ligand>
</feature>
<proteinExistence type="inferred from homology"/>
<evidence type="ECO:0000255" key="1">
    <source>
        <dbReference type="HAMAP-Rule" id="MF_01696"/>
    </source>
</evidence>
<name>MSHB_MYCPA</name>
<gene>
    <name evidence="1" type="primary">mshB</name>
    <name type="ordered locus">MAP_2613c</name>
</gene>
<protein>
    <recommendedName>
        <fullName evidence="1">1D-myo-inositol 2-acetamido-2-deoxy-alpha-D-glucopyranoside deacetylase</fullName>
        <shortName evidence="1">GlcNAc-Ins deacetylase</shortName>
        <ecNumber evidence="1">3.5.1.103</ecNumber>
    </recommendedName>
    <alternativeName>
        <fullName>N-acetyl-1-D-myo-inositol 2-amino-2-deoxy-alpha-D-glucopyranoside deacetylase</fullName>
    </alternativeName>
</protein>
<sequence length="300" mass="31908">MAETPRLLFVHAHPDDESLGTGATIAHYTAAGADVRVVTCTLGEEGEVIGERWAELAVDRADQLGGYRIGELTAALRELGVGEPCYLGGAGRWRDSGMPGTPRRRRQRFIDADEREAVGALVAIIREQRPHVVVGYDPAGGYGHPDHVHVHTVTTAAVAAAGAGNFPGEPWAVPKFYWSVFATRPFEAAVQALTPEDLRPGWSMPSAEQFTFGYADEHIDAVVAAGPHAWAAKRAALAAHATQVVVGPTGRACALSNNVALPILDEEHYVLVAGAAGARDERGWETDLLAGLEFGAAPRR</sequence>
<dbReference type="EC" id="3.5.1.103" evidence="1"/>
<dbReference type="EMBL" id="AE016958">
    <property type="protein sequence ID" value="AAS04930.1"/>
    <property type="molecule type" value="Genomic_DNA"/>
</dbReference>
<dbReference type="RefSeq" id="WP_003875462.1">
    <property type="nucleotide sequence ID" value="NZ_CP106873.1"/>
</dbReference>
<dbReference type="SMR" id="Q73WP7"/>
<dbReference type="STRING" id="262316.MAP_2613c"/>
<dbReference type="KEGG" id="mpa:MAP_2613c"/>
<dbReference type="PATRIC" id="fig|262316.17.peg.2779"/>
<dbReference type="eggNOG" id="COG2120">
    <property type="taxonomic scope" value="Bacteria"/>
</dbReference>
<dbReference type="HOGENOM" id="CLU_049311_2_1_11"/>
<dbReference type="Proteomes" id="UP000000580">
    <property type="component" value="Chromosome"/>
</dbReference>
<dbReference type="GO" id="GO:0035595">
    <property type="term" value="F:N-acetylglucosaminylinositol deacetylase activity"/>
    <property type="evidence" value="ECO:0007669"/>
    <property type="project" value="UniProtKB-EC"/>
</dbReference>
<dbReference type="GO" id="GO:0008270">
    <property type="term" value="F:zinc ion binding"/>
    <property type="evidence" value="ECO:0007669"/>
    <property type="project" value="UniProtKB-UniRule"/>
</dbReference>
<dbReference type="GO" id="GO:0010125">
    <property type="term" value="P:mycothiol biosynthetic process"/>
    <property type="evidence" value="ECO:0007669"/>
    <property type="project" value="UniProtKB-UniRule"/>
</dbReference>
<dbReference type="Gene3D" id="3.40.50.10320">
    <property type="entry name" value="LmbE-like"/>
    <property type="match status" value="1"/>
</dbReference>
<dbReference type="HAMAP" id="MF_01696">
    <property type="entry name" value="MshB"/>
    <property type="match status" value="1"/>
</dbReference>
<dbReference type="InterPro" id="IPR003737">
    <property type="entry name" value="GlcNAc_PI_deacetylase-related"/>
</dbReference>
<dbReference type="InterPro" id="IPR024078">
    <property type="entry name" value="LmbE-like_dom_sf"/>
</dbReference>
<dbReference type="InterPro" id="IPR017810">
    <property type="entry name" value="Mycothiol_biosynthesis_MshB"/>
</dbReference>
<dbReference type="NCBIfam" id="TIGR03445">
    <property type="entry name" value="mycothiol_MshB"/>
    <property type="match status" value="1"/>
</dbReference>
<dbReference type="PANTHER" id="PTHR12993:SF26">
    <property type="entry name" value="1D-MYO-INOSITOL 2-ACETAMIDO-2-DEOXY-ALPHA-D-GLUCOPYRANOSIDE DEACETYLASE"/>
    <property type="match status" value="1"/>
</dbReference>
<dbReference type="PANTHER" id="PTHR12993">
    <property type="entry name" value="N-ACETYLGLUCOSAMINYL-PHOSPHATIDYLINOSITOL DE-N-ACETYLASE-RELATED"/>
    <property type="match status" value="1"/>
</dbReference>
<dbReference type="Pfam" id="PF02585">
    <property type="entry name" value="PIG-L"/>
    <property type="match status" value="1"/>
</dbReference>
<dbReference type="SUPFAM" id="SSF102588">
    <property type="entry name" value="LmbE-like"/>
    <property type="match status" value="1"/>
</dbReference>